<protein>
    <recommendedName>
        <fullName evidence="1">Aspartyl/glutamyl-tRNA(Asn/Gln) amidotransferase subunit C</fullName>
        <shortName evidence="1">Asp/Glu-ADT subunit C</shortName>
        <ecNumber evidence="1">6.3.5.-</ecNumber>
    </recommendedName>
</protein>
<sequence>MSVDISTVKRVAHLARIAVSEEDAERMTGELNAILGFVEQLNEVDVEGIEPMTSVTPMKMRMREDKVTDGGIAAAVVANAPVTEDNFFVVPKVVE</sequence>
<name>GATC_BRUMB</name>
<dbReference type="EC" id="6.3.5.-" evidence="1"/>
<dbReference type="EMBL" id="CP001489">
    <property type="protein sequence ID" value="ACO02399.1"/>
    <property type="molecule type" value="Genomic_DNA"/>
</dbReference>
<dbReference type="RefSeq" id="WP_004686069.1">
    <property type="nucleotide sequence ID" value="NC_012442.1"/>
</dbReference>
<dbReference type="SMR" id="C0RLB6"/>
<dbReference type="KEGG" id="bmi:BMEA_B0570"/>
<dbReference type="HOGENOM" id="CLU_105899_2_0_5"/>
<dbReference type="Proteomes" id="UP000001748">
    <property type="component" value="Chromosome II"/>
</dbReference>
<dbReference type="GO" id="GO:0050566">
    <property type="term" value="F:asparaginyl-tRNA synthase (glutamine-hydrolyzing) activity"/>
    <property type="evidence" value="ECO:0007669"/>
    <property type="project" value="RHEA"/>
</dbReference>
<dbReference type="GO" id="GO:0005524">
    <property type="term" value="F:ATP binding"/>
    <property type="evidence" value="ECO:0007669"/>
    <property type="project" value="UniProtKB-KW"/>
</dbReference>
<dbReference type="GO" id="GO:0050567">
    <property type="term" value="F:glutaminyl-tRNA synthase (glutamine-hydrolyzing) activity"/>
    <property type="evidence" value="ECO:0007669"/>
    <property type="project" value="UniProtKB-UniRule"/>
</dbReference>
<dbReference type="GO" id="GO:0070681">
    <property type="term" value="P:glutaminyl-tRNAGln biosynthesis via transamidation"/>
    <property type="evidence" value="ECO:0007669"/>
    <property type="project" value="TreeGrafter"/>
</dbReference>
<dbReference type="GO" id="GO:0006450">
    <property type="term" value="P:regulation of translational fidelity"/>
    <property type="evidence" value="ECO:0007669"/>
    <property type="project" value="InterPro"/>
</dbReference>
<dbReference type="GO" id="GO:0006412">
    <property type="term" value="P:translation"/>
    <property type="evidence" value="ECO:0007669"/>
    <property type="project" value="UniProtKB-UniRule"/>
</dbReference>
<dbReference type="Gene3D" id="1.10.20.60">
    <property type="entry name" value="Glu-tRNAGln amidotransferase C subunit, N-terminal domain"/>
    <property type="match status" value="1"/>
</dbReference>
<dbReference type="HAMAP" id="MF_00122">
    <property type="entry name" value="GatC"/>
    <property type="match status" value="1"/>
</dbReference>
<dbReference type="InterPro" id="IPR036113">
    <property type="entry name" value="Asp/Glu-ADT_sf_sub_c"/>
</dbReference>
<dbReference type="InterPro" id="IPR003837">
    <property type="entry name" value="GatC"/>
</dbReference>
<dbReference type="NCBIfam" id="TIGR00135">
    <property type="entry name" value="gatC"/>
    <property type="match status" value="1"/>
</dbReference>
<dbReference type="PANTHER" id="PTHR15004">
    <property type="entry name" value="GLUTAMYL-TRNA(GLN) AMIDOTRANSFERASE SUBUNIT C, MITOCHONDRIAL"/>
    <property type="match status" value="1"/>
</dbReference>
<dbReference type="PANTHER" id="PTHR15004:SF0">
    <property type="entry name" value="GLUTAMYL-TRNA(GLN) AMIDOTRANSFERASE SUBUNIT C, MITOCHONDRIAL"/>
    <property type="match status" value="1"/>
</dbReference>
<dbReference type="Pfam" id="PF02686">
    <property type="entry name" value="GatC"/>
    <property type="match status" value="1"/>
</dbReference>
<dbReference type="SUPFAM" id="SSF141000">
    <property type="entry name" value="Glu-tRNAGln amidotransferase C subunit"/>
    <property type="match status" value="1"/>
</dbReference>
<feature type="chain" id="PRO_1000122556" description="Aspartyl/glutamyl-tRNA(Asn/Gln) amidotransferase subunit C">
    <location>
        <begin position="1"/>
        <end position="95"/>
    </location>
</feature>
<keyword id="KW-0067">ATP-binding</keyword>
<keyword id="KW-0436">Ligase</keyword>
<keyword id="KW-0547">Nucleotide-binding</keyword>
<keyword id="KW-0648">Protein biosynthesis</keyword>
<comment type="function">
    <text evidence="1">Allows the formation of correctly charged Asn-tRNA(Asn) or Gln-tRNA(Gln) through the transamidation of misacylated Asp-tRNA(Asn) or Glu-tRNA(Gln) in organisms which lack either or both of asparaginyl-tRNA or glutaminyl-tRNA synthetases. The reaction takes place in the presence of glutamine and ATP through an activated phospho-Asp-tRNA(Asn) or phospho-Glu-tRNA(Gln).</text>
</comment>
<comment type="catalytic activity">
    <reaction evidence="1">
        <text>L-glutamyl-tRNA(Gln) + L-glutamine + ATP + H2O = L-glutaminyl-tRNA(Gln) + L-glutamate + ADP + phosphate + H(+)</text>
        <dbReference type="Rhea" id="RHEA:17521"/>
        <dbReference type="Rhea" id="RHEA-COMP:9681"/>
        <dbReference type="Rhea" id="RHEA-COMP:9684"/>
        <dbReference type="ChEBI" id="CHEBI:15377"/>
        <dbReference type="ChEBI" id="CHEBI:15378"/>
        <dbReference type="ChEBI" id="CHEBI:29985"/>
        <dbReference type="ChEBI" id="CHEBI:30616"/>
        <dbReference type="ChEBI" id="CHEBI:43474"/>
        <dbReference type="ChEBI" id="CHEBI:58359"/>
        <dbReference type="ChEBI" id="CHEBI:78520"/>
        <dbReference type="ChEBI" id="CHEBI:78521"/>
        <dbReference type="ChEBI" id="CHEBI:456216"/>
    </reaction>
</comment>
<comment type="catalytic activity">
    <reaction evidence="1">
        <text>L-aspartyl-tRNA(Asn) + L-glutamine + ATP + H2O = L-asparaginyl-tRNA(Asn) + L-glutamate + ADP + phosphate + 2 H(+)</text>
        <dbReference type="Rhea" id="RHEA:14513"/>
        <dbReference type="Rhea" id="RHEA-COMP:9674"/>
        <dbReference type="Rhea" id="RHEA-COMP:9677"/>
        <dbReference type="ChEBI" id="CHEBI:15377"/>
        <dbReference type="ChEBI" id="CHEBI:15378"/>
        <dbReference type="ChEBI" id="CHEBI:29985"/>
        <dbReference type="ChEBI" id="CHEBI:30616"/>
        <dbReference type="ChEBI" id="CHEBI:43474"/>
        <dbReference type="ChEBI" id="CHEBI:58359"/>
        <dbReference type="ChEBI" id="CHEBI:78515"/>
        <dbReference type="ChEBI" id="CHEBI:78516"/>
        <dbReference type="ChEBI" id="CHEBI:456216"/>
    </reaction>
</comment>
<comment type="subunit">
    <text evidence="1">Heterotrimer of A, B and C subunits.</text>
</comment>
<comment type="similarity">
    <text evidence="1">Belongs to the GatC family.</text>
</comment>
<organism>
    <name type="scientific">Brucella melitensis biotype 2 (strain ATCC 23457)</name>
    <dbReference type="NCBI Taxonomy" id="546272"/>
    <lineage>
        <taxon>Bacteria</taxon>
        <taxon>Pseudomonadati</taxon>
        <taxon>Pseudomonadota</taxon>
        <taxon>Alphaproteobacteria</taxon>
        <taxon>Hyphomicrobiales</taxon>
        <taxon>Brucellaceae</taxon>
        <taxon>Brucella/Ochrobactrum group</taxon>
        <taxon>Brucella</taxon>
    </lineage>
</organism>
<accession>C0RLB6</accession>
<evidence type="ECO:0000255" key="1">
    <source>
        <dbReference type="HAMAP-Rule" id="MF_00122"/>
    </source>
</evidence>
<proteinExistence type="inferred from homology"/>
<gene>
    <name evidence="1" type="primary">gatC</name>
    <name type="ordered locus">BMEA_B0570</name>
</gene>
<reference key="1">
    <citation type="submission" date="2009-03" db="EMBL/GenBank/DDBJ databases">
        <title>Brucella melitensis ATCC 23457 whole genome shotgun sequencing project.</title>
        <authorList>
            <person name="Setubal J.C."/>
            <person name="Boyle S."/>
            <person name="Crasta O.R."/>
            <person name="Gillespie J.J."/>
            <person name="Kenyon R.W."/>
            <person name="Lu J."/>
            <person name="Mane S."/>
            <person name="Nagrani S."/>
            <person name="Shallom J.M."/>
            <person name="Shallom S."/>
            <person name="Shukla M."/>
            <person name="Snyder E.E."/>
            <person name="Sobral B.W."/>
            <person name="Wattam A.R."/>
            <person name="Will R."/>
            <person name="Williams K."/>
            <person name="Yoo H."/>
            <person name="Munk C."/>
            <person name="Tapia R."/>
            <person name="Han C."/>
            <person name="Detter J.C."/>
            <person name="Bruce D."/>
            <person name="Brettin T.S."/>
        </authorList>
    </citation>
    <scope>NUCLEOTIDE SEQUENCE [LARGE SCALE GENOMIC DNA]</scope>
    <source>
        <strain>ATCC 23457</strain>
    </source>
</reference>